<keyword id="KW-0053">Apoptosis</keyword>
<keyword id="KW-1003">Cell membrane</keyword>
<keyword id="KW-0202">Cytokine</keyword>
<keyword id="KW-0968">Cytoplasmic vesicle</keyword>
<keyword id="KW-1015">Disulfide bond</keyword>
<keyword id="KW-0325">Glycoprotein</keyword>
<keyword id="KW-0458">Lysosome</keyword>
<keyword id="KW-0472">Membrane</keyword>
<keyword id="KW-0539">Nucleus</keyword>
<keyword id="KW-1185">Reference proteome</keyword>
<keyword id="KW-0678">Repressor</keyword>
<keyword id="KW-0964">Secreted</keyword>
<keyword id="KW-0735">Signal-anchor</keyword>
<keyword id="KW-0804">Transcription</keyword>
<keyword id="KW-0805">Transcription regulation</keyword>
<keyword id="KW-0812">Transmembrane</keyword>
<keyword id="KW-1133">Transmembrane helix</keyword>
<keyword id="KW-0832">Ubl conjugation</keyword>
<organism>
    <name type="scientific">Macaca nemestrina</name>
    <name type="common">Pig-tailed macaque</name>
    <dbReference type="NCBI Taxonomy" id="9545"/>
    <lineage>
        <taxon>Eukaryota</taxon>
        <taxon>Metazoa</taxon>
        <taxon>Chordata</taxon>
        <taxon>Craniata</taxon>
        <taxon>Vertebrata</taxon>
        <taxon>Euteleostomi</taxon>
        <taxon>Mammalia</taxon>
        <taxon>Eutheria</taxon>
        <taxon>Euarchontoglires</taxon>
        <taxon>Primates</taxon>
        <taxon>Haplorrhini</taxon>
        <taxon>Catarrhini</taxon>
        <taxon>Cercopithecidae</taxon>
        <taxon>Cercopithecinae</taxon>
        <taxon>Macaca</taxon>
    </lineage>
</organism>
<accession>P63306</accession>
<accession>Q9BDM5</accession>
<accession>Q9MYL6</accession>
<sequence>MQQPFNYPYPQIYWVDSSASSPWAPPGTVLPCPTSVPRRPGQRRPPPPPPPPPLPPPPPSPLPPLPLPPLKKRGNHSTGLCLLVMFFMVLVALVGLGLGMFQLFHLQKELAELRESTSQKHTASSLEKQIGHPSPPPEKKEQRKVAHLTGKPNSRSMPLEWEDTYGIVLLSGVKYKKGGLVINETGLYFVYSKVYFRGQSCTNLPLSHKVYMRNSKYPQDLVMMEGKMMSYCTTGQMWAHSSYLGAVFNLTSADHLYVNVSELSLVNFEESQTFFGLYKL</sequence>
<dbReference type="EMBL" id="AB035140">
    <property type="protein sequence ID" value="BAA90296.1"/>
    <property type="molecule type" value="mRNA"/>
</dbReference>
<dbReference type="RefSeq" id="NP_001292845.1">
    <property type="nucleotide sequence ID" value="NM_001305916.1"/>
</dbReference>
<dbReference type="SMR" id="P63306"/>
<dbReference type="STRING" id="9545.ENSMNEP00000034549"/>
<dbReference type="GlyCosmos" id="P63306">
    <property type="glycosylation" value="3 sites, No reported glycans"/>
</dbReference>
<dbReference type="Ensembl" id="ENSMNET00000058999.1">
    <property type="protein sequence ID" value="ENSMNEP00000034549.1"/>
    <property type="gene ID" value="ENSMNEG00000040462.1"/>
</dbReference>
<dbReference type="GeneID" id="105484428"/>
<dbReference type="KEGG" id="mni:105484428"/>
<dbReference type="CTD" id="356"/>
<dbReference type="GeneTree" id="ENSGT01060000248544"/>
<dbReference type="OMA" id="KVKRSAH"/>
<dbReference type="OrthoDB" id="12930at314294"/>
<dbReference type="Proteomes" id="UP000233120">
    <property type="component" value="Unassembled WGS sequence"/>
</dbReference>
<dbReference type="Bgee" id="ENSMNEG00000040462">
    <property type="expression patterns" value="Expressed in lymph node and 2 other cell types or tissues"/>
</dbReference>
<dbReference type="GO" id="GO:0060205">
    <property type="term" value="C:cytoplasmic vesicle lumen"/>
    <property type="evidence" value="ECO:0007669"/>
    <property type="project" value="UniProtKB-SubCell"/>
</dbReference>
<dbReference type="GO" id="GO:0009897">
    <property type="term" value="C:external side of plasma membrane"/>
    <property type="evidence" value="ECO:0007669"/>
    <property type="project" value="Ensembl"/>
</dbReference>
<dbReference type="GO" id="GO:0070062">
    <property type="term" value="C:extracellular exosome"/>
    <property type="evidence" value="ECO:0007669"/>
    <property type="project" value="Ensembl"/>
</dbReference>
<dbReference type="GO" id="GO:0043202">
    <property type="term" value="C:lysosomal lumen"/>
    <property type="evidence" value="ECO:0007669"/>
    <property type="project" value="UniProtKB-SubCell"/>
</dbReference>
<dbReference type="GO" id="GO:0005634">
    <property type="term" value="C:nucleus"/>
    <property type="evidence" value="ECO:0000250"/>
    <property type="project" value="UniProtKB"/>
</dbReference>
<dbReference type="GO" id="GO:0005886">
    <property type="term" value="C:plasma membrane"/>
    <property type="evidence" value="ECO:0000250"/>
    <property type="project" value="UniProtKB"/>
</dbReference>
<dbReference type="GO" id="GO:0005125">
    <property type="term" value="F:cytokine activity"/>
    <property type="evidence" value="ECO:0007669"/>
    <property type="project" value="UniProtKB-KW"/>
</dbReference>
<dbReference type="GO" id="GO:0005164">
    <property type="term" value="F:tumor necrosis factor receptor binding"/>
    <property type="evidence" value="ECO:0007669"/>
    <property type="project" value="InterPro"/>
</dbReference>
<dbReference type="GO" id="GO:0008625">
    <property type="term" value="P:extrinsic apoptotic signaling pathway via death domain receptors"/>
    <property type="evidence" value="ECO:0007669"/>
    <property type="project" value="Ensembl"/>
</dbReference>
<dbReference type="GO" id="GO:0006955">
    <property type="term" value="P:immune response"/>
    <property type="evidence" value="ECO:0007669"/>
    <property type="project" value="InterPro"/>
</dbReference>
<dbReference type="GO" id="GO:0097527">
    <property type="term" value="P:necroptotic signaling pathway"/>
    <property type="evidence" value="ECO:0007669"/>
    <property type="project" value="Ensembl"/>
</dbReference>
<dbReference type="GO" id="GO:0016525">
    <property type="term" value="P:negative regulation of angiogenesis"/>
    <property type="evidence" value="ECO:0007669"/>
    <property type="project" value="Ensembl"/>
</dbReference>
<dbReference type="GO" id="GO:0000122">
    <property type="term" value="P:negative regulation of transcription by RNA polymerase II"/>
    <property type="evidence" value="ECO:0000250"/>
    <property type="project" value="UniProtKB"/>
</dbReference>
<dbReference type="GO" id="GO:0043123">
    <property type="term" value="P:positive regulation of canonical NF-kappaB signal transduction"/>
    <property type="evidence" value="ECO:0007669"/>
    <property type="project" value="Ensembl"/>
</dbReference>
<dbReference type="GO" id="GO:2000353">
    <property type="term" value="P:positive regulation of endothelial cell apoptotic process"/>
    <property type="evidence" value="ECO:0007669"/>
    <property type="project" value="Ensembl"/>
</dbReference>
<dbReference type="GO" id="GO:1905782">
    <property type="term" value="P:positive regulation of phosphatidylserine exposure on apoptotic cell surface"/>
    <property type="evidence" value="ECO:0007669"/>
    <property type="project" value="Ensembl"/>
</dbReference>
<dbReference type="GO" id="GO:1903514">
    <property type="term" value="P:release of sequestered calcium ion into cytosol by endoplasmic reticulum"/>
    <property type="evidence" value="ECO:0007669"/>
    <property type="project" value="Ensembl"/>
</dbReference>
<dbReference type="GO" id="GO:0046666">
    <property type="term" value="P:retinal cell programmed cell death"/>
    <property type="evidence" value="ECO:0007669"/>
    <property type="project" value="Ensembl"/>
</dbReference>
<dbReference type="GO" id="GO:0070231">
    <property type="term" value="P:T cell apoptotic process"/>
    <property type="evidence" value="ECO:0007669"/>
    <property type="project" value="Ensembl"/>
</dbReference>
<dbReference type="CDD" id="cd00184">
    <property type="entry name" value="TNF"/>
    <property type="match status" value="1"/>
</dbReference>
<dbReference type="FunFam" id="2.60.120.40:FF:000017">
    <property type="entry name" value="Tumor necrosis factor ligand superfamily member 6"/>
    <property type="match status" value="1"/>
</dbReference>
<dbReference type="Gene3D" id="2.60.120.40">
    <property type="match status" value="1"/>
</dbReference>
<dbReference type="InterPro" id="IPR028326">
    <property type="entry name" value="FASL"/>
</dbReference>
<dbReference type="InterPro" id="IPR006053">
    <property type="entry name" value="TNF"/>
</dbReference>
<dbReference type="InterPro" id="IPR021184">
    <property type="entry name" value="TNF_CS"/>
</dbReference>
<dbReference type="InterPro" id="IPR006052">
    <property type="entry name" value="TNF_dom"/>
</dbReference>
<dbReference type="InterPro" id="IPR008983">
    <property type="entry name" value="Tumour_necrosis_fac-like_dom"/>
</dbReference>
<dbReference type="PANTHER" id="PTHR11471">
    <property type="entry name" value="TUMOR NECROSIS FACTOR FAMILY MEMBER"/>
    <property type="match status" value="1"/>
</dbReference>
<dbReference type="PANTHER" id="PTHR11471:SF33">
    <property type="entry name" value="TUMOR NECROSIS FACTOR LIGAND SUPERFAMILY MEMBER 6"/>
    <property type="match status" value="1"/>
</dbReference>
<dbReference type="Pfam" id="PF00229">
    <property type="entry name" value="TNF"/>
    <property type="match status" value="1"/>
</dbReference>
<dbReference type="PRINTS" id="PR01681">
    <property type="entry name" value="FASLIGAND"/>
</dbReference>
<dbReference type="PRINTS" id="PR01234">
    <property type="entry name" value="TNECROSISFCT"/>
</dbReference>
<dbReference type="SMART" id="SM00207">
    <property type="entry name" value="TNF"/>
    <property type="match status" value="1"/>
</dbReference>
<dbReference type="SUPFAM" id="SSF49842">
    <property type="entry name" value="TNF-like"/>
    <property type="match status" value="1"/>
</dbReference>
<dbReference type="PROSITE" id="PS00251">
    <property type="entry name" value="THD_1"/>
    <property type="match status" value="1"/>
</dbReference>
<dbReference type="PROSITE" id="PS50049">
    <property type="entry name" value="THD_2"/>
    <property type="match status" value="1"/>
</dbReference>
<name>TNFL6_MACNE</name>
<protein>
    <recommendedName>
        <fullName>Tumor necrosis factor ligand superfamily member 6</fullName>
    </recommendedName>
    <alternativeName>
        <fullName>CD95 ligand</fullName>
        <shortName>CD95-L</shortName>
    </alternativeName>
    <alternativeName>
        <fullName>Fas antigen ligand</fullName>
        <shortName>Fas ligand</shortName>
        <shortName>FasL</shortName>
    </alternativeName>
    <cdAntigenName>CD178</cdAntigenName>
    <component>
        <recommendedName>
            <fullName>Tumor necrosis factor ligand superfamily member 6, membrane form</fullName>
        </recommendedName>
    </component>
    <component>
        <recommendedName>
            <fullName>Tumor necrosis factor ligand superfamily member 6, soluble form</fullName>
        </recommendedName>
        <alternativeName>
            <fullName>Receptor-binding FasL ectodomain</fullName>
        </alternativeName>
        <alternativeName>
            <fullName>Soluble Fas ligand</fullName>
            <shortName>sFasL</shortName>
        </alternativeName>
    </component>
    <component>
        <recommendedName>
            <fullName>ADAM10-processed FasL form</fullName>
            <shortName>APL</shortName>
        </recommendedName>
    </component>
    <component>
        <recommendedName>
            <fullName>FasL intracellular domain</fullName>
            <shortName>FasL ICD</shortName>
        </recommendedName>
        <alternativeName>
            <fullName>SPPL2A-processed FasL form</fullName>
            <shortName>SPA</shortName>
        </alternativeName>
    </component>
</protein>
<gene>
    <name type="primary">FASLG</name>
    <name type="synonym">CD95L</name>
    <name type="synonym">FASL</name>
    <name type="synonym">TNFSF6</name>
</gene>
<reference key="1">
    <citation type="journal article" date="2003" name="J. Immunol. Methods">
        <title>Molecular cloning, functional characterization, and enzyme-linked immunosorbent assay of cynomolgus monkey Fas ligand.</title>
        <authorList>
            <person name="Kirii Y."/>
            <person name="Inoue T."/>
            <person name="Yoshino K."/>
            <person name="Kayagaki N."/>
            <person name="Yagita H."/>
            <person name="Okumura K."/>
            <person name="Shibata H."/>
            <person name="Yoshikawa Y."/>
            <person name="Terao K."/>
        </authorList>
    </citation>
    <scope>NUCLEOTIDE SEQUENCE [MRNA]</scope>
</reference>
<comment type="function">
    <text evidence="2 3">Cytokine that binds to TNFRSF6/FAS, a receptor that transduces the apoptotic signal into cells. Involved in cytotoxic T-cell-mediated apoptosis, natural killer cell-mediated apoptosis and in T-cell development. Initiates fratricidal/suicidal activation-induced cell death (AICD) in antigen-activated T-cells contributing to the termination of immune responses. TNFRSF6/FAS-mediated apoptosis has also a role in the induction of peripheral tolerance. Binds to TNFRSF6B/DcR3, a decoy receptor that blocks apoptosis.</text>
</comment>
<comment type="function">
    <molecule>Tumor necrosis factor ligand superfamily member 6, soluble form</molecule>
    <text evidence="2">Induces FAS-mediated activation of NF-kappa-B, initiating non-apoptotic signaling pathways. Can induce apoptosis but does not appear to be essential for this process.</text>
</comment>
<comment type="function">
    <molecule>FasL intracellular domain</molecule>
    <text evidence="3">Cytoplasmic form induces gene transcription inhibition.</text>
</comment>
<comment type="subunit">
    <text evidence="3">Homotrimer. Interacts with ARHGAP9, BAIAP2L1, BTK, CACNB3, CACNB4, CRK, DLG2, DNMBP, DOCK4, EPS8L3, FGR, FYB1, FYN, HCK, ITK, ITSN2, KALRN, LYN, MACC1, MIA, MPP4, MYO15A, NCF1, NCK1, NCK2, NCKIPSD, OSTF1, PIK3R1, PSTPIP1, RIMBP3C, SAMSN1, SH3GL3, SH3PXD2B, SH3PXD2A, SH3RF2, SKAP2, SNX33, SNX9, SORBS3, SPTA1, SRC, SRGAP1, SRGAP2, SRGAP3, TEC, TJP3 and YES1.</text>
</comment>
<comment type="subcellular location">
    <subcellularLocation>
        <location evidence="3">Cell membrane</location>
        <topology evidence="4">Single-pass type II membrane protein</topology>
    </subcellularLocation>
    <subcellularLocation>
        <location evidence="3">Cytoplasmic vesicle lumen</location>
    </subcellularLocation>
    <subcellularLocation>
        <location evidence="3">Lysosome lumen</location>
    </subcellularLocation>
    <text evidence="3">Colocalizes with the SPPL2A protease at the cell membrane. Is internalized into multivesicular bodies of secretory lysosomes after phosphorylation by FGR and monoubiquitination.</text>
</comment>
<comment type="subcellular location">
    <molecule>Tumor necrosis factor ligand superfamily member 6, soluble form</molecule>
    <subcellularLocation>
        <location evidence="3">Secreted</location>
    </subcellularLocation>
    <text evidence="3">May be released into the extracellular fluid by cleavage form the cell surface.</text>
</comment>
<comment type="subcellular location">
    <molecule>FasL intracellular domain</molecule>
    <subcellularLocation>
        <location evidence="3">Nucleus</location>
    </subcellularLocation>
    <text evidence="3">The FasL ICD cytoplasmic form is translocated into the nucleus.</text>
</comment>
<comment type="PTM">
    <text evidence="3">The soluble form derives from the membrane form by proteolytic processing. The membrane-bound form undergoes two successive intramembrane proteolytic cleavages. The first one is processed by ADAM10 producing an N-terminal fragment, which lacks the receptor-binding extracellular domain. This ADAM10-processed FasL (FAsL APL) remnant form is still membrane anchored and further processed by SPPL2A that liberates the FasL intracellular domain (FasL ICD). FasL shedding by ADAM10 is a prerequisite for subsequent intramembrane cleavage by SPPL2A in T-cells.</text>
</comment>
<comment type="PTM">
    <text evidence="3">Phosphorylated by FGR on tyrosine residues; this is required for ubiquitination and subsequent internalization.</text>
</comment>
<comment type="PTM">
    <text evidence="3">N-glycosylated. Glycosylation enhances apoptotic activity.</text>
</comment>
<comment type="PTM">
    <text evidence="3">Monoubiquitinated.</text>
</comment>
<comment type="similarity">
    <text evidence="7">Belongs to the tumor necrosis factor family.</text>
</comment>
<evidence type="ECO:0000250" key="1"/>
<evidence type="ECO:0000250" key="2">
    <source>
        <dbReference type="UniProtKB" id="P41047"/>
    </source>
</evidence>
<evidence type="ECO:0000250" key="3">
    <source>
        <dbReference type="UniProtKB" id="P48023"/>
    </source>
</evidence>
<evidence type="ECO:0000255" key="4"/>
<evidence type="ECO:0000255" key="5">
    <source>
        <dbReference type="PROSITE-ProRule" id="PRU01387"/>
    </source>
</evidence>
<evidence type="ECO:0000256" key="6">
    <source>
        <dbReference type="SAM" id="MobiDB-lite"/>
    </source>
</evidence>
<evidence type="ECO:0000305" key="7"/>
<feature type="chain" id="PRO_0000034506" description="Tumor necrosis factor ligand superfamily member 6, membrane form">
    <location>
        <begin position="1"/>
        <end position="280"/>
    </location>
</feature>
<feature type="chain" id="PRO_0000417157" description="ADAM10-processed FasL form" evidence="1">
    <location>
        <begin position="1"/>
        <end position="128"/>
    </location>
</feature>
<feature type="chain" id="PRO_0000417158" description="FasL intracellular domain" evidence="1">
    <location>
        <begin position="1"/>
        <end position="81"/>
    </location>
</feature>
<feature type="chain" id="PRO_0000034507" description="Tumor necrosis factor ligand superfamily member 6, soluble form" evidence="1">
    <location>
        <begin position="129"/>
        <end position="280"/>
    </location>
</feature>
<feature type="topological domain" description="Cytoplasmic" evidence="4">
    <location>
        <begin position="1"/>
        <end position="80"/>
    </location>
</feature>
<feature type="transmembrane region" description="Helical; Signal-anchor for type II membrane protein" evidence="4">
    <location>
        <begin position="81"/>
        <end position="101"/>
    </location>
</feature>
<feature type="topological domain" description="Extracellular" evidence="4">
    <location>
        <begin position="102"/>
        <end position="280"/>
    </location>
</feature>
<feature type="domain" description="THD" evidence="5">
    <location>
        <begin position="144"/>
        <end position="280"/>
    </location>
</feature>
<feature type="region of interest" description="Disordered" evidence="6">
    <location>
        <begin position="20"/>
        <end position="70"/>
    </location>
</feature>
<feature type="region of interest" description="Disordered" evidence="6">
    <location>
        <begin position="117"/>
        <end position="155"/>
    </location>
</feature>
<feature type="compositionally biased region" description="Pro residues" evidence="6">
    <location>
        <begin position="43"/>
        <end position="69"/>
    </location>
</feature>
<feature type="site" description="Cleavage; by SPPL2A" evidence="1">
    <location>
        <begin position="80"/>
        <end position="81"/>
    </location>
</feature>
<feature type="site" description="Cleavage; by ADAM10" evidence="1">
    <location>
        <begin position="128"/>
        <end position="129"/>
    </location>
</feature>
<feature type="glycosylation site" description="N-linked (GlcNAc...) asparagine" evidence="4">
    <location>
        <position position="183"/>
    </location>
</feature>
<feature type="glycosylation site" description="N-linked (GlcNAc...) asparagine" evidence="4">
    <location>
        <position position="249"/>
    </location>
</feature>
<feature type="glycosylation site" description="N-linked (GlcNAc...) asparagine" evidence="4">
    <location>
        <position position="259"/>
    </location>
</feature>
<feature type="disulfide bond" evidence="5">
    <location>
        <begin position="201"/>
        <end position="232"/>
    </location>
</feature>
<proteinExistence type="evidence at transcript level"/>